<feature type="chain" id="PRO_1000089154" description="Endoribonuclease YbeY">
    <location>
        <begin position="1"/>
        <end position="148"/>
    </location>
</feature>
<feature type="binding site" evidence="1">
    <location>
        <position position="113"/>
    </location>
    <ligand>
        <name>Zn(2+)</name>
        <dbReference type="ChEBI" id="CHEBI:29105"/>
        <note>catalytic</note>
    </ligand>
</feature>
<feature type="binding site" evidence="1">
    <location>
        <position position="117"/>
    </location>
    <ligand>
        <name>Zn(2+)</name>
        <dbReference type="ChEBI" id="CHEBI:29105"/>
        <note>catalytic</note>
    </ligand>
</feature>
<feature type="binding site" evidence="1">
    <location>
        <position position="123"/>
    </location>
    <ligand>
        <name>Zn(2+)</name>
        <dbReference type="ChEBI" id="CHEBI:29105"/>
        <note>catalytic</note>
    </ligand>
</feature>
<organism>
    <name type="scientific">Borrelia hermsii (strain HS1 / DAH)</name>
    <dbReference type="NCBI Taxonomy" id="314723"/>
    <lineage>
        <taxon>Bacteria</taxon>
        <taxon>Pseudomonadati</taxon>
        <taxon>Spirochaetota</taxon>
        <taxon>Spirochaetia</taxon>
        <taxon>Spirochaetales</taxon>
        <taxon>Borreliaceae</taxon>
        <taxon>Borrelia</taxon>
    </lineage>
</organism>
<comment type="function">
    <text evidence="1">Single strand-specific metallo-endoribonuclease involved in late-stage 70S ribosome quality control and in maturation of the 3' terminus of the 16S rRNA.</text>
</comment>
<comment type="cofactor">
    <cofactor evidence="1">
        <name>Zn(2+)</name>
        <dbReference type="ChEBI" id="CHEBI:29105"/>
    </cofactor>
    <text evidence="1">Binds 1 zinc ion.</text>
</comment>
<comment type="subcellular location">
    <subcellularLocation>
        <location evidence="1">Cytoplasm</location>
    </subcellularLocation>
</comment>
<comment type="similarity">
    <text evidence="1">Belongs to the endoribonuclease YbeY family.</text>
</comment>
<reference key="1">
    <citation type="submission" date="2004-12" db="EMBL/GenBank/DDBJ databases">
        <title>The genome sequence of Borrelia hermsii and Borrelia turicatae: comparative analysis of two agents of endemic N. America relapsing fever.</title>
        <authorList>
            <person name="Porcella S.F."/>
            <person name="Raffel S.J."/>
            <person name="Schrumpf M.E."/>
            <person name="Montgomery B."/>
            <person name="Smith T."/>
            <person name="Schwan T.G."/>
        </authorList>
    </citation>
    <scope>NUCLEOTIDE SEQUENCE [LARGE SCALE GENOMIC DNA]</scope>
    <source>
        <strain>HS1 / DAH</strain>
    </source>
</reference>
<name>YBEY_BORHD</name>
<sequence length="148" mass="17721">MIKEELNLWAEGVEFKHWDAYYNFILSVLNFLCIEEYELSVVLCNNEYIQKLNSAFRQKSEPTDVLSFNYLEENGQINHKIQGDLIISLEYLEFSSLEFNVEMYDELQRNTIHGILHLIGYTHETNDFQNEEMLVIQEKVLRETRRVF</sequence>
<protein>
    <recommendedName>
        <fullName evidence="1">Endoribonuclease YbeY</fullName>
        <ecNumber evidence="1">3.1.-.-</ecNumber>
    </recommendedName>
</protein>
<gene>
    <name evidence="1" type="primary">ybeY</name>
    <name type="ordered locus">BH0060</name>
</gene>
<accession>B2S1P5</accession>
<evidence type="ECO:0000255" key="1">
    <source>
        <dbReference type="HAMAP-Rule" id="MF_00009"/>
    </source>
</evidence>
<proteinExistence type="inferred from homology"/>
<keyword id="KW-0963">Cytoplasm</keyword>
<keyword id="KW-0255">Endonuclease</keyword>
<keyword id="KW-0378">Hydrolase</keyword>
<keyword id="KW-0479">Metal-binding</keyword>
<keyword id="KW-0540">Nuclease</keyword>
<keyword id="KW-0690">Ribosome biogenesis</keyword>
<keyword id="KW-0698">rRNA processing</keyword>
<keyword id="KW-0862">Zinc</keyword>
<dbReference type="EC" id="3.1.-.-" evidence="1"/>
<dbReference type="EMBL" id="CP000048">
    <property type="protein sequence ID" value="AAX16582.1"/>
    <property type="molecule type" value="Genomic_DNA"/>
</dbReference>
<dbReference type="RefSeq" id="WP_012421839.1">
    <property type="nucleotide sequence ID" value="NZ_CP073136.1"/>
</dbReference>
<dbReference type="SMR" id="B2S1P5"/>
<dbReference type="GeneID" id="71842872"/>
<dbReference type="KEGG" id="bhr:BH0060"/>
<dbReference type="HOGENOM" id="CLU_106710_3_3_12"/>
<dbReference type="Proteomes" id="UP000008834">
    <property type="component" value="Chromosome"/>
</dbReference>
<dbReference type="GO" id="GO:0005737">
    <property type="term" value="C:cytoplasm"/>
    <property type="evidence" value="ECO:0007669"/>
    <property type="project" value="UniProtKB-SubCell"/>
</dbReference>
<dbReference type="GO" id="GO:0004222">
    <property type="term" value="F:metalloendopeptidase activity"/>
    <property type="evidence" value="ECO:0007669"/>
    <property type="project" value="InterPro"/>
</dbReference>
<dbReference type="GO" id="GO:0004521">
    <property type="term" value="F:RNA endonuclease activity"/>
    <property type="evidence" value="ECO:0007669"/>
    <property type="project" value="UniProtKB-UniRule"/>
</dbReference>
<dbReference type="GO" id="GO:0008270">
    <property type="term" value="F:zinc ion binding"/>
    <property type="evidence" value="ECO:0007669"/>
    <property type="project" value="UniProtKB-UniRule"/>
</dbReference>
<dbReference type="GO" id="GO:0006364">
    <property type="term" value="P:rRNA processing"/>
    <property type="evidence" value="ECO:0007669"/>
    <property type="project" value="UniProtKB-UniRule"/>
</dbReference>
<dbReference type="Gene3D" id="3.40.390.30">
    <property type="entry name" value="Metalloproteases ('zincins'), catalytic domain"/>
    <property type="match status" value="1"/>
</dbReference>
<dbReference type="HAMAP" id="MF_00009">
    <property type="entry name" value="Endoribonucl_YbeY"/>
    <property type="match status" value="1"/>
</dbReference>
<dbReference type="InterPro" id="IPR023091">
    <property type="entry name" value="MetalPrtase_cat_dom_sf_prd"/>
</dbReference>
<dbReference type="InterPro" id="IPR002036">
    <property type="entry name" value="YbeY"/>
</dbReference>
<dbReference type="InterPro" id="IPR020549">
    <property type="entry name" value="YbeY_CS"/>
</dbReference>
<dbReference type="NCBIfam" id="TIGR00043">
    <property type="entry name" value="rRNA maturation RNase YbeY"/>
    <property type="match status" value="1"/>
</dbReference>
<dbReference type="PANTHER" id="PTHR46986">
    <property type="entry name" value="ENDORIBONUCLEASE YBEY, CHLOROPLASTIC"/>
    <property type="match status" value="1"/>
</dbReference>
<dbReference type="PANTHER" id="PTHR46986:SF1">
    <property type="entry name" value="ENDORIBONUCLEASE YBEY, CHLOROPLASTIC"/>
    <property type="match status" value="1"/>
</dbReference>
<dbReference type="Pfam" id="PF02130">
    <property type="entry name" value="YbeY"/>
    <property type="match status" value="1"/>
</dbReference>
<dbReference type="SUPFAM" id="SSF55486">
    <property type="entry name" value="Metalloproteases ('zincins'), catalytic domain"/>
    <property type="match status" value="1"/>
</dbReference>
<dbReference type="PROSITE" id="PS01306">
    <property type="entry name" value="UPF0054"/>
    <property type="match status" value="1"/>
</dbReference>